<feature type="chain" id="PRO_0000117115" description="tRNA uridine 5-carboxymethylaminomethyl modification enzyme MnmG">
    <location>
        <begin position="1"/>
        <end position="632"/>
    </location>
</feature>
<feature type="region of interest" description="Disordered" evidence="2">
    <location>
        <begin position="206"/>
        <end position="225"/>
    </location>
</feature>
<feature type="compositionally biased region" description="Basic and acidic residues" evidence="2">
    <location>
        <begin position="216"/>
        <end position="225"/>
    </location>
</feature>
<feature type="binding site" evidence="1">
    <location>
        <begin position="16"/>
        <end position="21"/>
    </location>
    <ligand>
        <name>FAD</name>
        <dbReference type="ChEBI" id="CHEBI:57692"/>
    </ligand>
</feature>
<feature type="binding site" evidence="1">
    <location>
        <position position="128"/>
    </location>
    <ligand>
        <name>FAD</name>
        <dbReference type="ChEBI" id="CHEBI:57692"/>
    </ligand>
</feature>
<feature type="binding site" evidence="1">
    <location>
        <position position="183"/>
    </location>
    <ligand>
        <name>FAD</name>
        <dbReference type="ChEBI" id="CHEBI:57692"/>
    </ligand>
</feature>
<feature type="binding site" evidence="1">
    <location>
        <begin position="277"/>
        <end position="291"/>
    </location>
    <ligand>
        <name>NAD(+)</name>
        <dbReference type="ChEBI" id="CHEBI:57540"/>
    </ligand>
</feature>
<feature type="binding site" evidence="1">
    <location>
        <position position="374"/>
    </location>
    <ligand>
        <name>FAD</name>
        <dbReference type="ChEBI" id="CHEBI:57692"/>
    </ligand>
</feature>
<evidence type="ECO:0000255" key="1">
    <source>
        <dbReference type="HAMAP-Rule" id="MF_00129"/>
    </source>
</evidence>
<evidence type="ECO:0000256" key="2">
    <source>
        <dbReference type="SAM" id="MobiDB-lite"/>
    </source>
</evidence>
<organism>
    <name type="scientific">Lactobacillus acidophilus (strain ATCC 700396 / NCK56 / N2 / NCFM)</name>
    <dbReference type="NCBI Taxonomy" id="272621"/>
    <lineage>
        <taxon>Bacteria</taxon>
        <taxon>Bacillati</taxon>
        <taxon>Bacillota</taxon>
        <taxon>Bacilli</taxon>
        <taxon>Lactobacillales</taxon>
        <taxon>Lactobacillaceae</taxon>
        <taxon>Lactobacillus</taxon>
    </lineage>
</organism>
<gene>
    <name evidence="1" type="primary">mnmG</name>
    <name evidence="1" type="synonym">gidA</name>
    <name type="ordered locus">LBA1975</name>
</gene>
<protein>
    <recommendedName>
        <fullName evidence="1">tRNA uridine 5-carboxymethylaminomethyl modification enzyme MnmG</fullName>
    </recommendedName>
    <alternativeName>
        <fullName evidence="1">Glucose-inhibited division protein A</fullName>
    </alternativeName>
</protein>
<reference key="1">
    <citation type="journal article" date="2005" name="Proc. Natl. Acad. Sci. U.S.A.">
        <title>Complete genome sequence of the probiotic lactic acid bacterium Lactobacillus acidophilus NCFM.</title>
        <authorList>
            <person name="Altermann E."/>
            <person name="Russell W.M."/>
            <person name="Azcarate-Peril M.A."/>
            <person name="Barrangou R."/>
            <person name="Buck B.L."/>
            <person name="McAuliffe O."/>
            <person name="Souther N."/>
            <person name="Dobson A."/>
            <person name="Duong T."/>
            <person name="Callanan M."/>
            <person name="Lick S."/>
            <person name="Hamrick A."/>
            <person name="Cano R."/>
            <person name="Klaenhammer T.R."/>
        </authorList>
    </citation>
    <scope>NUCLEOTIDE SEQUENCE [LARGE SCALE GENOMIC DNA]</scope>
    <source>
        <strain>ATCC 700396 / NCK56 / N2 / NCFM</strain>
    </source>
</reference>
<name>MNMG_LACAC</name>
<keyword id="KW-0963">Cytoplasm</keyword>
<keyword id="KW-0274">FAD</keyword>
<keyword id="KW-0285">Flavoprotein</keyword>
<keyword id="KW-0520">NAD</keyword>
<keyword id="KW-1185">Reference proteome</keyword>
<keyword id="KW-0819">tRNA processing</keyword>
<proteinExistence type="inferred from homology"/>
<comment type="function">
    <text evidence="1">NAD-binding protein involved in the addition of a carboxymethylaminomethyl (cmnm) group at the wobble position (U34) of certain tRNAs, forming tRNA-cmnm(5)s(2)U34.</text>
</comment>
<comment type="cofactor">
    <cofactor evidence="1">
        <name>FAD</name>
        <dbReference type="ChEBI" id="CHEBI:57692"/>
    </cofactor>
</comment>
<comment type="subunit">
    <text evidence="1">Homodimer. Heterotetramer of two MnmE and two MnmG subunits.</text>
</comment>
<comment type="subcellular location">
    <subcellularLocation>
        <location evidence="1">Cytoplasm</location>
    </subcellularLocation>
</comment>
<comment type="similarity">
    <text evidence="1">Belongs to the MnmG family.</text>
</comment>
<dbReference type="EMBL" id="CP000033">
    <property type="protein sequence ID" value="AAV43768.1"/>
    <property type="molecule type" value="Genomic_DNA"/>
</dbReference>
<dbReference type="RefSeq" id="WP_003549419.1">
    <property type="nucleotide sequence ID" value="NC_006814.3"/>
</dbReference>
<dbReference type="RefSeq" id="YP_194799.1">
    <property type="nucleotide sequence ID" value="NC_006814.3"/>
</dbReference>
<dbReference type="SMR" id="Q5FHQ6"/>
<dbReference type="STRING" id="272621.LBA1975"/>
<dbReference type="GeneID" id="93290891"/>
<dbReference type="KEGG" id="lac:LBA1975"/>
<dbReference type="PATRIC" id="fig|272621.13.peg.1879"/>
<dbReference type="eggNOG" id="COG0445">
    <property type="taxonomic scope" value="Bacteria"/>
</dbReference>
<dbReference type="HOGENOM" id="CLU_007831_2_2_9"/>
<dbReference type="OrthoDB" id="9815560at2"/>
<dbReference type="BioCyc" id="LACI272621:G1G49-1923-MONOMER"/>
<dbReference type="Proteomes" id="UP000006381">
    <property type="component" value="Chromosome"/>
</dbReference>
<dbReference type="GO" id="GO:0005829">
    <property type="term" value="C:cytosol"/>
    <property type="evidence" value="ECO:0007669"/>
    <property type="project" value="TreeGrafter"/>
</dbReference>
<dbReference type="GO" id="GO:0050660">
    <property type="term" value="F:flavin adenine dinucleotide binding"/>
    <property type="evidence" value="ECO:0007669"/>
    <property type="project" value="UniProtKB-UniRule"/>
</dbReference>
<dbReference type="GO" id="GO:0030488">
    <property type="term" value="P:tRNA methylation"/>
    <property type="evidence" value="ECO:0007669"/>
    <property type="project" value="TreeGrafter"/>
</dbReference>
<dbReference type="GO" id="GO:0002098">
    <property type="term" value="P:tRNA wobble uridine modification"/>
    <property type="evidence" value="ECO:0007669"/>
    <property type="project" value="InterPro"/>
</dbReference>
<dbReference type="FunFam" id="1.10.10.1800:FF:000001">
    <property type="entry name" value="tRNA uridine 5-carboxymethylaminomethyl modification enzyme MnmG"/>
    <property type="match status" value="1"/>
</dbReference>
<dbReference type="FunFam" id="1.10.150.570:FF:000001">
    <property type="entry name" value="tRNA uridine 5-carboxymethylaminomethyl modification enzyme MnmG"/>
    <property type="match status" value="1"/>
</dbReference>
<dbReference type="FunFam" id="3.50.50.60:FF:000002">
    <property type="entry name" value="tRNA uridine 5-carboxymethylaminomethyl modification enzyme MnmG"/>
    <property type="match status" value="1"/>
</dbReference>
<dbReference type="FunFam" id="3.50.50.60:FF:000063">
    <property type="entry name" value="tRNA uridine 5-carboxymethylaminomethyl modification enzyme MnmG"/>
    <property type="match status" value="1"/>
</dbReference>
<dbReference type="Gene3D" id="3.50.50.60">
    <property type="entry name" value="FAD/NAD(P)-binding domain"/>
    <property type="match status" value="2"/>
</dbReference>
<dbReference type="Gene3D" id="1.10.150.570">
    <property type="entry name" value="GidA associated domain, C-terminal subdomain"/>
    <property type="match status" value="1"/>
</dbReference>
<dbReference type="Gene3D" id="1.10.10.1800">
    <property type="entry name" value="tRNA uridine 5-carboxymethylaminomethyl modification enzyme MnmG/GidA"/>
    <property type="match status" value="1"/>
</dbReference>
<dbReference type="HAMAP" id="MF_00129">
    <property type="entry name" value="MnmG_GidA"/>
    <property type="match status" value="1"/>
</dbReference>
<dbReference type="InterPro" id="IPR036188">
    <property type="entry name" value="FAD/NAD-bd_sf"/>
</dbReference>
<dbReference type="InterPro" id="IPR049312">
    <property type="entry name" value="GIDA_C_N"/>
</dbReference>
<dbReference type="InterPro" id="IPR004416">
    <property type="entry name" value="MnmG"/>
</dbReference>
<dbReference type="InterPro" id="IPR002218">
    <property type="entry name" value="MnmG-rel"/>
</dbReference>
<dbReference type="InterPro" id="IPR020595">
    <property type="entry name" value="MnmG-rel_CS"/>
</dbReference>
<dbReference type="InterPro" id="IPR026904">
    <property type="entry name" value="MnmG_C"/>
</dbReference>
<dbReference type="InterPro" id="IPR047001">
    <property type="entry name" value="MnmG_C_subdom"/>
</dbReference>
<dbReference type="InterPro" id="IPR044920">
    <property type="entry name" value="MnmG_C_subdom_sf"/>
</dbReference>
<dbReference type="InterPro" id="IPR040131">
    <property type="entry name" value="MnmG_N"/>
</dbReference>
<dbReference type="NCBIfam" id="TIGR00136">
    <property type="entry name" value="mnmG_gidA"/>
    <property type="match status" value="1"/>
</dbReference>
<dbReference type="PANTHER" id="PTHR11806">
    <property type="entry name" value="GLUCOSE INHIBITED DIVISION PROTEIN A"/>
    <property type="match status" value="1"/>
</dbReference>
<dbReference type="PANTHER" id="PTHR11806:SF0">
    <property type="entry name" value="PROTEIN MTO1 HOMOLOG, MITOCHONDRIAL"/>
    <property type="match status" value="1"/>
</dbReference>
<dbReference type="Pfam" id="PF01134">
    <property type="entry name" value="GIDA"/>
    <property type="match status" value="1"/>
</dbReference>
<dbReference type="Pfam" id="PF21680">
    <property type="entry name" value="GIDA_C_1st"/>
    <property type="match status" value="1"/>
</dbReference>
<dbReference type="Pfam" id="PF13932">
    <property type="entry name" value="SAM_GIDA_C"/>
    <property type="match status" value="1"/>
</dbReference>
<dbReference type="PRINTS" id="PR00368">
    <property type="entry name" value="FADPNR"/>
</dbReference>
<dbReference type="PRINTS" id="PR00411">
    <property type="entry name" value="PNDRDTASEI"/>
</dbReference>
<dbReference type="SMART" id="SM01228">
    <property type="entry name" value="GIDA_assoc_3"/>
    <property type="match status" value="1"/>
</dbReference>
<dbReference type="SUPFAM" id="SSF51905">
    <property type="entry name" value="FAD/NAD(P)-binding domain"/>
    <property type="match status" value="1"/>
</dbReference>
<dbReference type="PROSITE" id="PS01280">
    <property type="entry name" value="GIDA_1"/>
    <property type="match status" value="1"/>
</dbReference>
<dbReference type="PROSITE" id="PS01281">
    <property type="entry name" value="GIDA_2"/>
    <property type="match status" value="1"/>
</dbReference>
<sequence length="632" mass="70478">MIKTYDSNEYDVIVVGAGHAGCEAALASAHMGQKTLLVTIGLDMVAFMPCNPSVGGPAKGTVVREIDALGGQMGKNIDATYIQMRMLNTGKGPAVRALRAQADKWQYHEYMKDTIENTPNLTLRQAIVDELVVEDGVCKGVITNTGAKYHAKSVVLTTGTAARGKIIIGELMYSSGPNNTTPSIKLSENLEKLGFKLRRFKTGTPPRVNGNTIDYSKTEEEPGDKVPRHFSYESKDENYLQNQISCWMTYTNPVTHEVIRDNLDRAPMFTGVIKGVGPRYCPSIEDKVVRFADKDRHQIFLEPEGKTTKEVYVGDFSTSMPEEVQLKMVHSVAGLEHAEMMRPGYAIEYDVVEPWQLKHTLETKNVKHLFTAGQMNGTSGYEEAAGQGLIAGINAALSAQGKSGFTLGRNDAYIGVLIDDLVTKGTNEPYRLLTSRAEYRLILRHDNADLRLTEYGHKLGLISDDRYQAFEEKKQAIKDTQARLHEITVHVTDEVQDFLKSIGQEPMKAGVKADVFLRRPHVTINDIERLTGQKIDGDRYVKEQVEIGIKYAGYIKKEETRIARLKRQEAKKIPADIDYNMIEGLATEARQKFEKIRPETLAQAERISGVNPADLAILSVYIQNGRYSRVNK</sequence>
<accession>Q5FHQ6</accession>